<gene>
    <name evidence="6" type="primary">xerC</name>
</gene>
<reference key="1">
    <citation type="journal article" date="2000" name="Microbiology">
        <title>Monitoring genome evolution ex vivo: reversible chromosomal integration of a 106 kb plasmid at two tRNA(Lys) gene loci in sequential Pseudomonas aeruginosa airway isolates.</title>
        <authorList>
            <person name="Kiewitz C."/>
            <person name="Larbig K."/>
            <person name="Klockgether J."/>
            <person name="Weinel C."/>
            <person name="Tuemmler B."/>
        </authorList>
    </citation>
    <scope>NUCLEOTIDE SEQUENCE [GENOMIC DNA]</scope>
    <source>
        <strain>SG17M</strain>
    </source>
</reference>
<feature type="chain" id="PRO_0000095352" description="Putative tyrosine recombinase XerC">
    <location>
        <begin position="1"/>
        <end position="427"/>
    </location>
</feature>
<feature type="domain" description="Core-binding (CB)" evidence="3">
    <location>
        <begin position="1"/>
        <end position="81"/>
    </location>
</feature>
<feature type="domain" description="Tyr recombinase" evidence="2">
    <location>
        <begin position="116"/>
        <end position="305"/>
    </location>
</feature>
<feature type="region of interest" description="Disordered" evidence="4">
    <location>
        <begin position="323"/>
        <end position="384"/>
    </location>
</feature>
<feature type="region of interest" description="Disordered" evidence="4">
    <location>
        <begin position="401"/>
        <end position="427"/>
    </location>
</feature>
<feature type="compositionally biased region" description="Basic and acidic residues" evidence="4">
    <location>
        <begin position="350"/>
        <end position="362"/>
    </location>
</feature>
<feature type="compositionally biased region" description="Low complexity" evidence="4">
    <location>
        <begin position="402"/>
        <end position="413"/>
    </location>
</feature>
<feature type="active site" evidence="2">
    <location>
        <position position="156"/>
    </location>
</feature>
<feature type="active site" evidence="2">
    <location>
        <position position="183"/>
    </location>
</feature>
<feature type="active site" evidence="2">
    <location>
        <position position="256"/>
    </location>
</feature>
<feature type="active site" evidence="2">
    <location>
        <position position="259"/>
    </location>
</feature>
<feature type="active site" evidence="2">
    <location>
        <position position="283"/>
    </location>
</feature>
<feature type="active site" description="O-(3'-phospho-DNA)-tyrosine intermediate" evidence="2">
    <location>
        <position position="292"/>
    </location>
</feature>
<protein>
    <recommendedName>
        <fullName evidence="5">Putative tyrosine recombinase XerC</fullName>
    </recommendedName>
</protein>
<dbReference type="EMBL" id="AF285416">
    <property type="protein sequence ID" value="AAG02084.1"/>
    <property type="molecule type" value="Genomic_DNA"/>
</dbReference>
<dbReference type="RefSeq" id="WP_003158137.1">
    <property type="nucleotide sequence ID" value="NZ_UGUJ01000005.1"/>
</dbReference>
<dbReference type="RefSeq" id="YP_006960522.1">
    <property type="nucleotide sequence ID" value="NC_019202.1"/>
</dbReference>
<dbReference type="SMR" id="Q9F771"/>
<dbReference type="eggNOG" id="COG4973">
    <property type="taxonomic scope" value="Bacteria"/>
</dbReference>
<dbReference type="GO" id="GO:0005737">
    <property type="term" value="C:cytoplasm"/>
    <property type="evidence" value="ECO:0007669"/>
    <property type="project" value="UniProtKB-SubCell"/>
</dbReference>
<dbReference type="GO" id="GO:0003677">
    <property type="term" value="F:DNA binding"/>
    <property type="evidence" value="ECO:0007669"/>
    <property type="project" value="UniProtKB-KW"/>
</dbReference>
<dbReference type="GO" id="GO:0051301">
    <property type="term" value="P:cell division"/>
    <property type="evidence" value="ECO:0007669"/>
    <property type="project" value="UniProtKB-KW"/>
</dbReference>
<dbReference type="GO" id="GO:0007059">
    <property type="term" value="P:chromosome segregation"/>
    <property type="evidence" value="ECO:0007669"/>
    <property type="project" value="UniProtKB-KW"/>
</dbReference>
<dbReference type="GO" id="GO:0015074">
    <property type="term" value="P:DNA integration"/>
    <property type="evidence" value="ECO:0007669"/>
    <property type="project" value="UniProtKB-KW"/>
</dbReference>
<dbReference type="GO" id="GO:0006310">
    <property type="term" value="P:DNA recombination"/>
    <property type="evidence" value="ECO:0007669"/>
    <property type="project" value="UniProtKB-KW"/>
</dbReference>
<dbReference type="CDD" id="cd00397">
    <property type="entry name" value="DNA_BRE_C"/>
    <property type="match status" value="1"/>
</dbReference>
<dbReference type="Gene3D" id="1.10.150.130">
    <property type="match status" value="1"/>
</dbReference>
<dbReference type="Gene3D" id="1.10.443.10">
    <property type="entry name" value="Intergrase catalytic core"/>
    <property type="match status" value="1"/>
</dbReference>
<dbReference type="InterPro" id="IPR044068">
    <property type="entry name" value="CB"/>
</dbReference>
<dbReference type="InterPro" id="IPR011010">
    <property type="entry name" value="DNA_brk_join_enz"/>
</dbReference>
<dbReference type="InterPro" id="IPR013762">
    <property type="entry name" value="Integrase-like_cat_sf"/>
</dbReference>
<dbReference type="InterPro" id="IPR002104">
    <property type="entry name" value="Integrase_catalytic"/>
</dbReference>
<dbReference type="InterPro" id="IPR010998">
    <property type="entry name" value="Integrase_recombinase_N"/>
</dbReference>
<dbReference type="InterPro" id="IPR050090">
    <property type="entry name" value="Tyrosine_recombinase_XerCD"/>
</dbReference>
<dbReference type="PANTHER" id="PTHR30349">
    <property type="entry name" value="PHAGE INTEGRASE-RELATED"/>
    <property type="match status" value="1"/>
</dbReference>
<dbReference type="PANTHER" id="PTHR30349:SF64">
    <property type="entry name" value="PROPHAGE INTEGRASE INTD-RELATED"/>
    <property type="match status" value="1"/>
</dbReference>
<dbReference type="Pfam" id="PF00589">
    <property type="entry name" value="Phage_integrase"/>
    <property type="match status" value="1"/>
</dbReference>
<dbReference type="SUPFAM" id="SSF56349">
    <property type="entry name" value="DNA breaking-rejoining enzymes"/>
    <property type="match status" value="1"/>
</dbReference>
<dbReference type="PROSITE" id="PS51900">
    <property type="entry name" value="CB"/>
    <property type="match status" value="1"/>
</dbReference>
<dbReference type="PROSITE" id="PS51898">
    <property type="entry name" value="TYR_RECOMBINASE"/>
    <property type="match status" value="1"/>
</dbReference>
<geneLocation type="plasmid">
    <name>pKLC102</name>
</geneLocation>
<organism>
    <name type="scientific">Pseudomonas aeruginosa</name>
    <dbReference type="NCBI Taxonomy" id="287"/>
    <lineage>
        <taxon>Bacteria</taxon>
        <taxon>Pseudomonadati</taxon>
        <taxon>Pseudomonadota</taxon>
        <taxon>Gammaproteobacteria</taxon>
        <taxon>Pseudomonadales</taxon>
        <taxon>Pseudomonadaceae</taxon>
        <taxon>Pseudomonas</taxon>
    </lineage>
</organism>
<name>XER_PSEAI</name>
<evidence type="ECO:0000250" key="1">
    <source>
        <dbReference type="UniProtKB" id="P0A8P8"/>
    </source>
</evidence>
<evidence type="ECO:0000255" key="2">
    <source>
        <dbReference type="PROSITE-ProRule" id="PRU01246"/>
    </source>
</evidence>
<evidence type="ECO:0000255" key="3">
    <source>
        <dbReference type="PROSITE-ProRule" id="PRU01248"/>
    </source>
</evidence>
<evidence type="ECO:0000256" key="4">
    <source>
        <dbReference type="SAM" id="MobiDB-lite"/>
    </source>
</evidence>
<evidence type="ECO:0000305" key="5"/>
<evidence type="ECO:0000312" key="6">
    <source>
        <dbReference type="EMBL" id="AAG02084.1"/>
    </source>
</evidence>
<proteinExistence type="inferred from homology"/>
<comment type="function">
    <text evidence="1">Site-specific tyrosine recombinase, which acts by catalyzing the cutting and rejoining of the recombining DNA molecules.</text>
</comment>
<comment type="subcellular location">
    <subcellularLocation>
        <location evidence="5">Cytoplasm</location>
    </subcellularLocation>
</comment>
<comment type="miscellaneous">
    <text evidence="5">In contrast to other XerC proteins, it has a longer C-terminal part.</text>
</comment>
<comment type="miscellaneous">
    <text>It is found in the pKLC102 plasmid, which can integrate the bacterial chromosome at the att site of the pilA hypervariable region.</text>
</comment>
<comment type="similarity">
    <text evidence="5">Belongs to the 'phage' integrase family.</text>
</comment>
<keyword id="KW-0131">Cell cycle</keyword>
<keyword id="KW-0132">Cell division</keyword>
<keyword id="KW-0159">Chromosome partition</keyword>
<keyword id="KW-0963">Cytoplasm</keyword>
<keyword id="KW-0229">DNA integration</keyword>
<keyword id="KW-0233">DNA recombination</keyword>
<keyword id="KW-0238">DNA-binding</keyword>
<keyword id="KW-0614">Plasmid</keyword>
<accession>Q9F771</accession>
<sequence>MTPQQLTEEYIFAHDLREASAKIYRAATKALLKHFGPTATVQDVDHRAVLGWRRKVLEQGLSKRSWNTYSNHLRTIWGYAIEHELVTHSQVNPFRKTTVIPPRRASKTVAAEAILRARSWLSMQVGAERCTGDRARITPAWFWLCTFEVFYYTGIRLNALLCIRKRDIDWDNQLILIRGETEKTHKEFVVPITEGLVPHLSRLLQEAEKAGFADDDQLFNVNRFSPHYKSKTMNSDQVEAMYRKLTEKVGVRMTPHRFRHTLATDLMKAPERNIHLTKCLLNHSNIQTTMSYIEADYDHMRAVLHARSLAQGALENVRKVDYSGSPQASAKPKPCGQPLARVGEVPPPEARTEPSEPREHTQETGIQRGPTSWEAEAVPQPPDTFEQSVLFTLMAQHLSNRAATASAVPAATSGSGGRGSAARDSLA</sequence>